<dbReference type="EMBL" id="AC146520">
    <property type="status" value="NOT_ANNOTATED_CDS"/>
    <property type="molecule type" value="Genomic_DNA"/>
</dbReference>
<dbReference type="SMR" id="P0DKW5"/>
<dbReference type="STRING" id="37293.ENSANAP00000021488"/>
<dbReference type="Ensembl" id="ENSANAT00000039376.1">
    <property type="protein sequence ID" value="ENSANAP00000021488.1"/>
    <property type="gene ID" value="ENSANAG00000028543.1"/>
</dbReference>
<dbReference type="GeneTree" id="ENSGT00950000182929"/>
<dbReference type="OMA" id="GHMTDAR"/>
<dbReference type="Proteomes" id="UP000233020">
    <property type="component" value="Unplaced"/>
</dbReference>
<dbReference type="GO" id="GO:0034360">
    <property type="term" value="C:chylomicron remnant"/>
    <property type="evidence" value="ECO:0007669"/>
    <property type="project" value="Ensembl"/>
</dbReference>
<dbReference type="GO" id="GO:0005783">
    <property type="term" value="C:endoplasmic reticulum"/>
    <property type="evidence" value="ECO:0007669"/>
    <property type="project" value="Ensembl"/>
</dbReference>
<dbReference type="GO" id="GO:0070062">
    <property type="term" value="C:extracellular exosome"/>
    <property type="evidence" value="ECO:0000250"/>
    <property type="project" value="UniProtKB"/>
</dbReference>
<dbReference type="GO" id="GO:0031012">
    <property type="term" value="C:extracellular matrix"/>
    <property type="evidence" value="ECO:0000250"/>
    <property type="project" value="UniProtKB"/>
</dbReference>
<dbReference type="GO" id="GO:0005615">
    <property type="term" value="C:extracellular space"/>
    <property type="evidence" value="ECO:0000250"/>
    <property type="project" value="UniProtKB"/>
</dbReference>
<dbReference type="GO" id="GO:0098978">
    <property type="term" value="C:glutamatergic synapse"/>
    <property type="evidence" value="ECO:0007669"/>
    <property type="project" value="Ensembl"/>
</dbReference>
<dbReference type="GO" id="GO:0005794">
    <property type="term" value="C:Golgi apparatus"/>
    <property type="evidence" value="ECO:0007669"/>
    <property type="project" value="Ensembl"/>
</dbReference>
<dbReference type="GO" id="GO:0034364">
    <property type="term" value="C:high-density lipoprotein particle"/>
    <property type="evidence" value="ECO:0000250"/>
    <property type="project" value="UniProtKB"/>
</dbReference>
<dbReference type="GO" id="GO:0034363">
    <property type="term" value="C:intermediate-density lipoprotein particle"/>
    <property type="evidence" value="ECO:0000250"/>
    <property type="project" value="UniProtKB"/>
</dbReference>
<dbReference type="GO" id="GO:0034362">
    <property type="term" value="C:low-density lipoprotein particle"/>
    <property type="evidence" value="ECO:0000250"/>
    <property type="project" value="UniProtKB"/>
</dbReference>
<dbReference type="GO" id="GO:0042470">
    <property type="term" value="C:melanosome"/>
    <property type="evidence" value="ECO:0007669"/>
    <property type="project" value="Ensembl"/>
</dbReference>
<dbReference type="GO" id="GO:0097487">
    <property type="term" value="C:multivesicular body, internal vesicle"/>
    <property type="evidence" value="ECO:0000250"/>
    <property type="project" value="UniProtKB"/>
</dbReference>
<dbReference type="GO" id="GO:0005886">
    <property type="term" value="C:plasma membrane"/>
    <property type="evidence" value="ECO:0007669"/>
    <property type="project" value="GOC"/>
</dbReference>
<dbReference type="GO" id="GO:0043083">
    <property type="term" value="C:synaptic cleft"/>
    <property type="evidence" value="ECO:0007669"/>
    <property type="project" value="Ensembl"/>
</dbReference>
<dbReference type="GO" id="GO:0034361">
    <property type="term" value="C:very-low-density lipoprotein particle"/>
    <property type="evidence" value="ECO:0000250"/>
    <property type="project" value="UniProtKB"/>
</dbReference>
<dbReference type="GO" id="GO:0001540">
    <property type="term" value="F:amyloid-beta binding"/>
    <property type="evidence" value="ECO:0007669"/>
    <property type="project" value="Ensembl"/>
</dbReference>
<dbReference type="GO" id="GO:0016209">
    <property type="term" value="F:antioxidant activity"/>
    <property type="evidence" value="ECO:0007669"/>
    <property type="project" value="Ensembl"/>
</dbReference>
<dbReference type="GO" id="GO:0120020">
    <property type="term" value="F:cholesterol transfer activity"/>
    <property type="evidence" value="ECO:0007669"/>
    <property type="project" value="Ensembl"/>
</dbReference>
<dbReference type="GO" id="GO:0019899">
    <property type="term" value="F:enzyme binding"/>
    <property type="evidence" value="ECO:0007669"/>
    <property type="project" value="Ensembl"/>
</dbReference>
<dbReference type="GO" id="GO:0043395">
    <property type="term" value="F:heparan sulfate proteoglycan binding"/>
    <property type="evidence" value="ECO:0000250"/>
    <property type="project" value="UniProtKB"/>
</dbReference>
<dbReference type="GO" id="GO:0008201">
    <property type="term" value="F:heparin binding"/>
    <property type="evidence" value="ECO:0000250"/>
    <property type="project" value="UniProtKB"/>
</dbReference>
<dbReference type="GO" id="GO:0042802">
    <property type="term" value="F:identical protein binding"/>
    <property type="evidence" value="ECO:0000250"/>
    <property type="project" value="UniProtKB"/>
</dbReference>
<dbReference type="GO" id="GO:0071813">
    <property type="term" value="F:lipoprotein particle binding"/>
    <property type="evidence" value="ECO:0007669"/>
    <property type="project" value="Ensembl"/>
</dbReference>
<dbReference type="GO" id="GO:0050750">
    <property type="term" value="F:low-density lipoprotein particle receptor binding"/>
    <property type="evidence" value="ECO:0000250"/>
    <property type="project" value="UniProtKB"/>
</dbReference>
<dbReference type="GO" id="GO:0046911">
    <property type="term" value="F:metal chelating activity"/>
    <property type="evidence" value="ECO:0007669"/>
    <property type="project" value="Ensembl"/>
</dbReference>
<dbReference type="GO" id="GO:0060228">
    <property type="term" value="F:phosphatidylcholine-sterol O-acyltransferase activator activity"/>
    <property type="evidence" value="ECO:0007669"/>
    <property type="project" value="Ensembl"/>
</dbReference>
<dbReference type="GO" id="GO:0005543">
    <property type="term" value="F:phospholipid binding"/>
    <property type="evidence" value="ECO:0007669"/>
    <property type="project" value="Ensembl"/>
</dbReference>
<dbReference type="GO" id="GO:0042803">
    <property type="term" value="F:protein homodimerization activity"/>
    <property type="evidence" value="ECO:0007669"/>
    <property type="project" value="Ensembl"/>
</dbReference>
<dbReference type="GO" id="GO:0048018">
    <property type="term" value="F:receptor ligand activity"/>
    <property type="evidence" value="ECO:0007669"/>
    <property type="project" value="Ensembl"/>
</dbReference>
<dbReference type="GO" id="GO:0048156">
    <property type="term" value="F:tau protein binding"/>
    <property type="evidence" value="ECO:0007669"/>
    <property type="project" value="Ensembl"/>
</dbReference>
<dbReference type="GO" id="GO:0070326">
    <property type="term" value="F:very-low-density lipoprotein particle receptor binding"/>
    <property type="evidence" value="ECO:0007669"/>
    <property type="project" value="Ensembl"/>
</dbReference>
<dbReference type="GO" id="GO:0097113">
    <property type="term" value="P:AMPA glutamate receptor clustering"/>
    <property type="evidence" value="ECO:0007669"/>
    <property type="project" value="Ensembl"/>
</dbReference>
<dbReference type="GO" id="GO:0042982">
    <property type="term" value="P:amyloid precursor protein metabolic process"/>
    <property type="evidence" value="ECO:0007669"/>
    <property type="project" value="Ensembl"/>
</dbReference>
<dbReference type="GO" id="GO:0048844">
    <property type="term" value="P:artery morphogenesis"/>
    <property type="evidence" value="ECO:0007669"/>
    <property type="project" value="Ensembl"/>
</dbReference>
<dbReference type="GO" id="GO:0071402">
    <property type="term" value="P:cellular response to lipoprotein particle stimulus"/>
    <property type="evidence" value="ECO:0007669"/>
    <property type="project" value="Ensembl"/>
</dbReference>
<dbReference type="GO" id="GO:0006707">
    <property type="term" value="P:cholesterol catabolic process"/>
    <property type="evidence" value="ECO:0007669"/>
    <property type="project" value="Ensembl"/>
</dbReference>
<dbReference type="GO" id="GO:0033344">
    <property type="term" value="P:cholesterol efflux"/>
    <property type="evidence" value="ECO:0000250"/>
    <property type="project" value="UniProtKB"/>
</dbReference>
<dbReference type="GO" id="GO:0042632">
    <property type="term" value="P:cholesterol homeostasis"/>
    <property type="evidence" value="ECO:0007669"/>
    <property type="project" value="Ensembl"/>
</dbReference>
<dbReference type="GO" id="GO:0034382">
    <property type="term" value="P:chylomicron remnant clearance"/>
    <property type="evidence" value="ECO:0000250"/>
    <property type="project" value="UniProtKB"/>
</dbReference>
<dbReference type="GO" id="GO:0055089">
    <property type="term" value="P:fatty acid homeostasis"/>
    <property type="evidence" value="ECO:0007669"/>
    <property type="project" value="Ensembl"/>
</dbReference>
<dbReference type="GO" id="GO:0007186">
    <property type="term" value="P:G protein-coupled receptor signaling pathway"/>
    <property type="evidence" value="ECO:0007669"/>
    <property type="project" value="Ensembl"/>
</dbReference>
<dbReference type="GO" id="GO:0010467">
    <property type="term" value="P:gene expression"/>
    <property type="evidence" value="ECO:0007669"/>
    <property type="project" value="Ensembl"/>
</dbReference>
<dbReference type="GO" id="GO:0034380">
    <property type="term" value="P:high-density lipoprotein particle assembly"/>
    <property type="evidence" value="ECO:0000250"/>
    <property type="project" value="UniProtKB"/>
</dbReference>
<dbReference type="GO" id="GO:0034384">
    <property type="term" value="P:high-density lipoprotein particle clearance"/>
    <property type="evidence" value="ECO:0007669"/>
    <property type="project" value="Ensembl"/>
</dbReference>
<dbReference type="GO" id="GO:0034375">
    <property type="term" value="P:high-density lipoprotein particle remodeling"/>
    <property type="evidence" value="ECO:0007669"/>
    <property type="project" value="Ensembl"/>
</dbReference>
<dbReference type="GO" id="GO:0071831">
    <property type="term" value="P:intermediate-density lipoprotein particle clearance"/>
    <property type="evidence" value="ECO:0000250"/>
    <property type="project" value="UniProtKB"/>
</dbReference>
<dbReference type="GO" id="GO:0006874">
    <property type="term" value="P:intracellular calcium ion homeostasis"/>
    <property type="evidence" value="ECO:0007669"/>
    <property type="project" value="Ensembl"/>
</dbReference>
<dbReference type="GO" id="GO:0010877">
    <property type="term" value="P:lipid transport involved in lipid storage"/>
    <property type="evidence" value="ECO:0007669"/>
    <property type="project" value="Ensembl"/>
</dbReference>
<dbReference type="GO" id="GO:0042158">
    <property type="term" value="P:lipoprotein biosynthetic process"/>
    <property type="evidence" value="ECO:0000250"/>
    <property type="project" value="UniProtKB"/>
</dbReference>
<dbReference type="GO" id="GO:0042159">
    <property type="term" value="P:lipoprotein catabolic process"/>
    <property type="evidence" value="ECO:0007669"/>
    <property type="project" value="Ensembl"/>
</dbReference>
<dbReference type="GO" id="GO:0035641">
    <property type="term" value="P:locomotory exploration behavior"/>
    <property type="evidence" value="ECO:0007669"/>
    <property type="project" value="Ensembl"/>
</dbReference>
<dbReference type="GO" id="GO:0015909">
    <property type="term" value="P:long-chain fatty acid transport"/>
    <property type="evidence" value="ECO:0007669"/>
    <property type="project" value="Ensembl"/>
</dbReference>
<dbReference type="GO" id="GO:0007616">
    <property type="term" value="P:long-term memory"/>
    <property type="evidence" value="ECO:0007669"/>
    <property type="project" value="Ensembl"/>
</dbReference>
<dbReference type="GO" id="GO:0034374">
    <property type="term" value="P:low-density lipoprotein particle remodeling"/>
    <property type="evidence" value="ECO:0007669"/>
    <property type="project" value="Ensembl"/>
</dbReference>
<dbReference type="GO" id="GO:0051651">
    <property type="term" value="P:maintenance of location in cell"/>
    <property type="evidence" value="ECO:0007669"/>
    <property type="project" value="Ensembl"/>
</dbReference>
<dbReference type="GO" id="GO:0032438">
    <property type="term" value="P:melanosome organization"/>
    <property type="evidence" value="ECO:0000250"/>
    <property type="project" value="UniProtKB"/>
</dbReference>
<dbReference type="GO" id="GO:1905907">
    <property type="term" value="P:negative regulation of amyloid fibril formation"/>
    <property type="evidence" value="ECO:0000250"/>
    <property type="project" value="UniProtKB"/>
</dbReference>
<dbReference type="GO" id="GO:1902430">
    <property type="term" value="P:negative regulation of amyloid-beta formation"/>
    <property type="evidence" value="ECO:0007669"/>
    <property type="project" value="Ensembl"/>
</dbReference>
<dbReference type="GO" id="GO:0043537">
    <property type="term" value="P:negative regulation of blood vessel endothelial cell migration"/>
    <property type="evidence" value="ECO:0007669"/>
    <property type="project" value="Ensembl"/>
</dbReference>
<dbReference type="GO" id="GO:0090090">
    <property type="term" value="P:negative regulation of canonical Wnt signaling pathway"/>
    <property type="evidence" value="ECO:0007669"/>
    <property type="project" value="Ensembl"/>
</dbReference>
<dbReference type="GO" id="GO:0045541">
    <property type="term" value="P:negative regulation of cholesterol biosynthetic process"/>
    <property type="evidence" value="ECO:0007669"/>
    <property type="project" value="Ensembl"/>
</dbReference>
<dbReference type="GO" id="GO:0001937">
    <property type="term" value="P:negative regulation of endothelial cell proliferation"/>
    <property type="evidence" value="ECO:0007669"/>
    <property type="project" value="Ensembl"/>
</dbReference>
<dbReference type="GO" id="GO:0010629">
    <property type="term" value="P:negative regulation of gene expression"/>
    <property type="evidence" value="ECO:0007669"/>
    <property type="project" value="Ensembl"/>
</dbReference>
<dbReference type="GO" id="GO:0050728">
    <property type="term" value="P:negative regulation of inflammatory response"/>
    <property type="evidence" value="ECO:0007669"/>
    <property type="project" value="Ensembl"/>
</dbReference>
<dbReference type="GO" id="GO:1900272">
    <property type="term" value="P:negative regulation of long-term synaptic potentiation"/>
    <property type="evidence" value="ECO:0007669"/>
    <property type="project" value="Ensembl"/>
</dbReference>
<dbReference type="GO" id="GO:0010977">
    <property type="term" value="P:negative regulation of neuron projection development"/>
    <property type="evidence" value="ECO:0007669"/>
    <property type="project" value="Ensembl"/>
</dbReference>
<dbReference type="GO" id="GO:0010544">
    <property type="term" value="P:negative regulation of platelet activation"/>
    <property type="evidence" value="ECO:0007669"/>
    <property type="project" value="Ensembl"/>
</dbReference>
<dbReference type="GO" id="GO:0050709">
    <property type="term" value="P:negative regulation of protein secretion"/>
    <property type="evidence" value="ECO:0007669"/>
    <property type="project" value="Ensembl"/>
</dbReference>
<dbReference type="GO" id="GO:0048662">
    <property type="term" value="P:negative regulation of smooth muscle cell proliferation"/>
    <property type="evidence" value="ECO:0007669"/>
    <property type="project" value="Ensembl"/>
</dbReference>
<dbReference type="GO" id="GO:0090209">
    <property type="term" value="P:negative regulation of triglyceride metabolic process"/>
    <property type="evidence" value="ECO:0007669"/>
    <property type="project" value="Ensembl"/>
</dbReference>
<dbReference type="GO" id="GO:0031175">
    <property type="term" value="P:neuron projection development"/>
    <property type="evidence" value="ECO:0000250"/>
    <property type="project" value="UniProtKB"/>
</dbReference>
<dbReference type="GO" id="GO:0038060">
    <property type="term" value="P:nitric oxide-cGMP-mediated signaling"/>
    <property type="evidence" value="ECO:0007669"/>
    <property type="project" value="Ensembl"/>
</dbReference>
<dbReference type="GO" id="GO:0097114">
    <property type="term" value="P:NMDA glutamate receptor clustering"/>
    <property type="evidence" value="ECO:0007669"/>
    <property type="project" value="Ensembl"/>
</dbReference>
<dbReference type="GO" id="GO:0033700">
    <property type="term" value="P:phospholipid efflux"/>
    <property type="evidence" value="ECO:0007669"/>
    <property type="project" value="Ensembl"/>
</dbReference>
<dbReference type="GO" id="GO:0044794">
    <property type="term" value="P:positive regulation by host of viral process"/>
    <property type="evidence" value="ECO:0007669"/>
    <property type="project" value="Ensembl"/>
</dbReference>
<dbReference type="GO" id="GO:1900223">
    <property type="term" value="P:positive regulation of amyloid-beta clearance"/>
    <property type="evidence" value="ECO:0000250"/>
    <property type="project" value="UniProtKB"/>
</dbReference>
<dbReference type="GO" id="GO:0010875">
    <property type="term" value="P:positive regulation of cholesterol efflux"/>
    <property type="evidence" value="ECO:0007669"/>
    <property type="project" value="Ensembl"/>
</dbReference>
<dbReference type="GO" id="GO:0090205">
    <property type="term" value="P:positive regulation of cholesterol metabolic process"/>
    <property type="evidence" value="ECO:0007669"/>
    <property type="project" value="Ensembl"/>
</dbReference>
<dbReference type="GO" id="GO:0060999">
    <property type="term" value="P:positive regulation of dendritic spine development"/>
    <property type="evidence" value="ECO:0007669"/>
    <property type="project" value="Ensembl"/>
</dbReference>
<dbReference type="GO" id="GO:1902952">
    <property type="term" value="P:positive regulation of dendritic spine maintenance"/>
    <property type="evidence" value="ECO:0007669"/>
    <property type="project" value="Ensembl"/>
</dbReference>
<dbReference type="GO" id="GO:0045893">
    <property type="term" value="P:positive regulation of DNA-templated transcription"/>
    <property type="evidence" value="ECO:0007669"/>
    <property type="project" value="Ensembl"/>
</dbReference>
<dbReference type="GO" id="GO:0045807">
    <property type="term" value="P:positive regulation of endocytosis"/>
    <property type="evidence" value="ECO:0007669"/>
    <property type="project" value="Ensembl"/>
</dbReference>
<dbReference type="GO" id="GO:0070374">
    <property type="term" value="P:positive regulation of ERK1 and ERK2 cascade"/>
    <property type="evidence" value="ECO:0007669"/>
    <property type="project" value="Ensembl"/>
</dbReference>
<dbReference type="GO" id="GO:0046889">
    <property type="term" value="P:positive regulation of lipid biosynthetic process"/>
    <property type="evidence" value="ECO:0007669"/>
    <property type="project" value="Ensembl"/>
</dbReference>
<dbReference type="GO" id="GO:1903002">
    <property type="term" value="P:positive regulation of lipid transport across blood-brain barrier"/>
    <property type="evidence" value="ECO:0007669"/>
    <property type="project" value="Ensembl"/>
</dbReference>
<dbReference type="GO" id="GO:0140077">
    <property type="term" value="P:positive regulation of lipoprotein transport"/>
    <property type="evidence" value="ECO:0007669"/>
    <property type="project" value="Ensembl"/>
</dbReference>
<dbReference type="GO" id="GO:0032805">
    <property type="term" value="P:positive regulation of low-density lipoprotein particle receptor catabolic process"/>
    <property type="evidence" value="ECO:0007669"/>
    <property type="project" value="Ensembl"/>
</dbReference>
<dbReference type="GO" id="GO:0051044">
    <property type="term" value="P:positive regulation of membrane protein ectodomain proteolysis"/>
    <property type="evidence" value="ECO:0007669"/>
    <property type="project" value="Ensembl"/>
</dbReference>
<dbReference type="GO" id="GO:0010976">
    <property type="term" value="P:positive regulation of neuron projection development"/>
    <property type="evidence" value="ECO:0007669"/>
    <property type="project" value="Ensembl"/>
</dbReference>
<dbReference type="GO" id="GO:0045429">
    <property type="term" value="P:positive regulation of nitric oxide biosynthetic process"/>
    <property type="evidence" value="ECO:0007669"/>
    <property type="project" value="Ensembl"/>
</dbReference>
<dbReference type="GO" id="GO:1902995">
    <property type="term" value="P:positive regulation of phospholipid efflux"/>
    <property type="evidence" value="ECO:0007669"/>
    <property type="project" value="Ensembl"/>
</dbReference>
<dbReference type="GO" id="GO:0017038">
    <property type="term" value="P:protein import"/>
    <property type="evidence" value="ECO:0007669"/>
    <property type="project" value="Ensembl"/>
</dbReference>
<dbReference type="GO" id="GO:0006898">
    <property type="term" value="P:receptor-mediated endocytosis"/>
    <property type="evidence" value="ECO:0007669"/>
    <property type="project" value="Ensembl"/>
</dbReference>
<dbReference type="GO" id="GO:0042981">
    <property type="term" value="P:regulation of apoptotic process"/>
    <property type="evidence" value="ECO:0007669"/>
    <property type="project" value="Ensembl"/>
</dbReference>
<dbReference type="GO" id="GO:2000822">
    <property type="term" value="P:regulation of behavioral fear response"/>
    <property type="evidence" value="ECO:0007669"/>
    <property type="project" value="Ensembl"/>
</dbReference>
<dbReference type="GO" id="GO:0032489">
    <property type="term" value="P:regulation of Cdc42 protein signal transduction"/>
    <property type="evidence" value="ECO:0007669"/>
    <property type="project" value="Ensembl"/>
</dbReference>
<dbReference type="GO" id="GO:1905890">
    <property type="term" value="P:regulation of cellular response to very-low-density lipoprotein particle stimulus"/>
    <property type="evidence" value="ECO:0007669"/>
    <property type="project" value="Ensembl"/>
</dbReference>
<dbReference type="GO" id="GO:0045088">
    <property type="term" value="P:regulation of innate immune response"/>
    <property type="evidence" value="ECO:0007669"/>
    <property type="project" value="Ensembl"/>
</dbReference>
<dbReference type="GO" id="GO:0061136">
    <property type="term" value="P:regulation of proteasomal protein catabolic process"/>
    <property type="evidence" value="ECO:0007669"/>
    <property type="project" value="Ensembl"/>
</dbReference>
<dbReference type="GO" id="GO:0043254">
    <property type="term" value="P:regulation of protein-containing complex assembly"/>
    <property type="evidence" value="ECO:0007669"/>
    <property type="project" value="Ensembl"/>
</dbReference>
<dbReference type="GO" id="GO:0061771">
    <property type="term" value="P:response to caloric restriction"/>
    <property type="evidence" value="ECO:0007669"/>
    <property type="project" value="Ensembl"/>
</dbReference>
<dbReference type="GO" id="GO:0002021">
    <property type="term" value="P:response to dietary excess"/>
    <property type="evidence" value="ECO:0007669"/>
    <property type="project" value="Ensembl"/>
</dbReference>
<dbReference type="GO" id="GO:0006979">
    <property type="term" value="P:response to oxidative stress"/>
    <property type="evidence" value="ECO:0007669"/>
    <property type="project" value="Ensembl"/>
</dbReference>
<dbReference type="GO" id="GO:0043691">
    <property type="term" value="P:reverse cholesterol transport"/>
    <property type="evidence" value="ECO:0007669"/>
    <property type="project" value="Ensembl"/>
</dbReference>
<dbReference type="GO" id="GO:0070328">
    <property type="term" value="P:triglyceride homeostasis"/>
    <property type="evidence" value="ECO:0007669"/>
    <property type="project" value="Ensembl"/>
</dbReference>
<dbReference type="GO" id="GO:0006641">
    <property type="term" value="P:triglyceride metabolic process"/>
    <property type="evidence" value="ECO:0007669"/>
    <property type="project" value="Ensembl"/>
</dbReference>
<dbReference type="GO" id="GO:0071830">
    <property type="term" value="P:triglyceride-rich lipoprotein particle clearance"/>
    <property type="evidence" value="ECO:0000250"/>
    <property type="project" value="UniProtKB"/>
</dbReference>
<dbReference type="GO" id="GO:0042311">
    <property type="term" value="P:vasodilation"/>
    <property type="evidence" value="ECO:0007669"/>
    <property type="project" value="Ensembl"/>
</dbReference>
<dbReference type="GO" id="GO:0034447">
    <property type="term" value="P:very-low-density lipoprotein particle clearance"/>
    <property type="evidence" value="ECO:0000250"/>
    <property type="project" value="UniProtKB"/>
</dbReference>
<dbReference type="GO" id="GO:0034372">
    <property type="term" value="P:very-low-density lipoprotein particle remodeling"/>
    <property type="evidence" value="ECO:0007669"/>
    <property type="project" value="Ensembl"/>
</dbReference>
<dbReference type="GO" id="GO:0019068">
    <property type="term" value="P:virion assembly"/>
    <property type="evidence" value="ECO:0007669"/>
    <property type="project" value="Ensembl"/>
</dbReference>
<dbReference type="FunFam" id="1.20.120.20:FF:000002">
    <property type="entry name" value="Apolipoprotein E"/>
    <property type="match status" value="1"/>
</dbReference>
<dbReference type="Gene3D" id="1.20.120.20">
    <property type="entry name" value="Apolipoprotein"/>
    <property type="match status" value="2"/>
</dbReference>
<dbReference type="InterPro" id="IPR000074">
    <property type="entry name" value="ApoA_E"/>
</dbReference>
<dbReference type="InterPro" id="IPR050163">
    <property type="entry name" value="Apolipoprotein_A1/A4/E"/>
</dbReference>
<dbReference type="PANTHER" id="PTHR18976">
    <property type="entry name" value="APOLIPOPROTEIN"/>
    <property type="match status" value="1"/>
</dbReference>
<dbReference type="PANTHER" id="PTHR18976:SF2">
    <property type="entry name" value="APOLIPOPROTEIN E"/>
    <property type="match status" value="1"/>
</dbReference>
<dbReference type="Pfam" id="PF01442">
    <property type="entry name" value="Apolipoprotein"/>
    <property type="match status" value="2"/>
</dbReference>
<dbReference type="SUPFAM" id="SSF58113">
    <property type="entry name" value="Apolipoprotein A-I"/>
    <property type="match status" value="1"/>
</dbReference>
<evidence type="ECO:0000250" key="1">
    <source>
        <dbReference type="UniProtKB" id="P02649"/>
    </source>
</evidence>
<evidence type="ECO:0000250" key="2">
    <source>
        <dbReference type="UniProtKB" id="P08226"/>
    </source>
</evidence>
<evidence type="ECO:0000255" key="3"/>
<evidence type="ECO:0000305" key="4"/>
<feature type="signal peptide" evidence="3">
    <location>
        <begin position="1"/>
        <end position="18"/>
    </location>
</feature>
<feature type="chain" id="PRO_0000420992" description="Apolipoprotein E">
    <location>
        <begin position="19"/>
        <end position="281"/>
    </location>
</feature>
<feature type="repeat" description="1">
    <location>
        <begin position="82"/>
        <end position="103"/>
    </location>
</feature>
<feature type="repeat" description="2">
    <location>
        <begin position="104"/>
        <end position="125"/>
    </location>
</feature>
<feature type="repeat" description="3">
    <location>
        <begin position="126"/>
        <end position="147"/>
    </location>
</feature>
<feature type="repeat" description="4">
    <location>
        <begin position="148"/>
        <end position="169"/>
    </location>
</feature>
<feature type="repeat" description="5">
    <location>
        <begin position="198"/>
        <end position="219"/>
    </location>
</feature>
<feature type="region of interest" description="5 X 22 AA approximate tandem repeats">
    <location>
        <begin position="82"/>
        <end position="219"/>
    </location>
</feature>
<feature type="region of interest" description="LDL and other lipoprotein receptors binding" evidence="1">
    <location>
        <begin position="160"/>
        <end position="170"/>
    </location>
</feature>
<feature type="region of interest" description="Homooligomerization" evidence="1">
    <location>
        <begin position="230"/>
        <end position="281"/>
    </location>
</feature>
<feature type="region of interest" description="Specificity for association with VLDL" evidence="1">
    <location>
        <begin position="242"/>
        <end position="254"/>
    </location>
</feature>
<feature type="binding site" evidence="1">
    <location>
        <begin position="164"/>
        <end position="167"/>
    </location>
    <ligand>
        <name>heparin</name>
        <dbReference type="ChEBI" id="CHEBI:28304"/>
    </ligand>
</feature>
<feature type="binding site" evidence="1">
    <location>
        <begin position="193"/>
        <end position="200"/>
    </location>
    <ligand>
        <name>heparin</name>
        <dbReference type="ChEBI" id="CHEBI:28304"/>
    </ligand>
</feature>
<feature type="modified residue" description="Methionine sulfoxide" evidence="2">
    <location>
        <position position="145"/>
    </location>
</feature>
<feature type="modified residue" description="Phosphoserine" evidence="1">
    <location>
        <position position="149"/>
    </location>
</feature>
<reference key="1">
    <citation type="submission" date="2015-02" db="EMBL/GenBank/DDBJ databases">
        <title>Owl monkey reference genome and diversity panel.</title>
        <authorList>
            <person name="Hughes D.S."/>
            <person name="Murali S."/>
            <person name="Raveendran M."/>
            <person name="Korchina V."/>
            <person name="Bandaranaike D."/>
            <person name="Bellair M."/>
            <person name="Blankenburg K."/>
            <person name="Chao H."/>
            <person name="Dahdouli M."/>
            <person name="Dinh H."/>
            <person name="Doddapaneni H."/>
            <person name="Jayaseelan J."/>
            <person name="Khan Z."/>
            <person name="Kovar C."/>
            <person name="Kurapati P."/>
            <person name="Le B."/>
            <person name="Lee S."/>
            <person name="Lorensuhewa L."/>
            <person name="Mathew T."/>
            <person name="Narasimhan A."/>
            <person name="Okwuonu G."/>
            <person name="Osuji N."/>
            <person name="Otenyo P."/>
            <person name="Qu C."/>
            <person name="Quiroz J."/>
            <person name="Raj R."/>
            <person name="Rajbhandari K."/>
            <person name="Santibanez J."/>
            <person name="Skinner E."/>
            <person name="Wang Y."/>
            <person name="Xin Y."/>
            <person name="Han Y."/>
            <person name="Muzny D.M."/>
            <person name="Richards S."/>
            <person name="Worley K.C."/>
            <person name="Rogers J."/>
            <person name="Gibbs R.A."/>
        </authorList>
    </citation>
    <scope>NUCLEOTIDE SEQUENCE [LARGE SCALE GENOMIC DNA]</scope>
</reference>
<reference key="2">
    <citation type="unpublished observations" date="2012-11">
        <authorList>
            <person name="Puppione D.L."/>
        </authorList>
    </citation>
    <scope>IDENTIFICATION</scope>
</reference>
<comment type="function">
    <text evidence="1">APOE is an apolipoprotein, a protein associating with lipid particles, that mainly functions in lipoprotein-mediated lipid transport between organs via the plasma and interstitial fluids. APOE is a core component of plasma lipoproteins and is involved in their production, conversion and clearance. Apolipoproteins are amphipathic molecules that interact both with lipids of the lipoprotein particle core and the aqueous environment of the plasma. As such, APOE associates with chylomicrons, chylomicron remnants, very low density lipoproteins (VLDL) and intermediate density lipoproteins (IDL) but shows a preferential binding to high-density lipoproteins (HDL). It also binds a wide range of cellular receptors including the LDL receptor/LDLR, the LDL receptor-related proteins LRP1, LRP2 and LRP8 and the very low-density lipoprotein receptor/VLDLR that mediate the cellular uptake of the APOE-containing lipoprotein particles. Finally, APOE also has a heparin-binding activity and binds heparan-sulfate proteoglycans on the surface of cells, a property that supports the capture and the receptor-mediated uptake of APOE-containing lipoproteins by cells. A main function of APOE is to mediate lipoprotein clearance through the uptake of chylomicrons, VLDLs, and HDLs by hepatocytes. APOE is also involved in the biosynthesis by the liver of VLDLs as well as their uptake by peripheral tissues ensuring the delivery of triglycerides and energy storage in muscle, heart and adipose tissues. By participating in the lipoprotein-mediated distribution of lipids among tissues, APOE plays a critical role in plasma and tissues lipid homeostasis. APOE is also involved in two steps of reverse cholesterol transport, the HDLs-mediated transport of cholesterol from peripheral tissues to the liver, and thereby plays an important role in cholesterol homeostasis. First, it is functionally associated with ABCA1 in the biogenesis of HDLs in tissues. Second, it is enriched in circulating HDLs and mediates their uptake by hepatocytes. APOE also plays an important role in lipid transport in the central nervous system, regulating neuron survival and sprouting.</text>
</comment>
<comment type="subunit">
    <text evidence="1">Homotetramer. May interact with ABCA1; functionally associated with ABCA1 in the biogenesis of HDLs. May interact with APP/A4 amyloid-beta peptide; the interaction is extremely stable in vitro but its physiological significance is unclear. May interact with MAPT. May interact with MAP2. In the cerebrospinal fluid, interacts with secreted SORL1. Interacts with PMEL; this allows the loading of PMEL luminal fragment on ILVs to induce fibril nucleation.</text>
</comment>
<comment type="subcellular location">
    <subcellularLocation>
        <location evidence="1">Secreted</location>
    </subcellularLocation>
    <subcellularLocation>
        <location evidence="1">Secreted</location>
        <location evidence="1">Extracellular space</location>
    </subcellularLocation>
    <subcellularLocation>
        <location evidence="1">Secreted</location>
        <location evidence="1">Extracellular space</location>
        <location evidence="1">Extracellular matrix</location>
    </subcellularLocation>
    <subcellularLocation>
        <location evidence="1">Extracellular vesicle</location>
    </subcellularLocation>
    <subcellularLocation>
        <location evidence="1">Endosome</location>
        <location evidence="1">Multivesicular body</location>
    </subcellularLocation>
    <text evidence="1">In the plasma, APOE is associated with chylomicrons, chylomicrons remnants, VLDL, LDL and HDL lipoproteins. Lipid poor oligomeric APOE is associated with the extracellular matrix in a calcium- and heparan-sulfate proteoglycans-dependent manner. Lipidation induces the release from the extracellular matrix. Colocalizes with CD63 and PMEL at exosomes and in intraluminal vesicles within multivesicular endosomes.</text>
</comment>
<comment type="PTM">
    <text evidence="1">APOE exists as multiple glycosylated and sialylated glycoforms within cells and in plasma. The extent of glycosylation and sialylation are tissue and context specific.</text>
</comment>
<comment type="PTM">
    <text evidence="1">Glycated in plasma VLDL.</text>
</comment>
<comment type="PTM">
    <text evidence="1">Phosphorylated by FAM20C in the extracellular medium.</text>
</comment>
<comment type="similarity">
    <text evidence="4">Belongs to the apolipoprotein A1/A4/E family.</text>
</comment>
<keyword id="KW-0162">Chylomicron</keyword>
<keyword id="KW-0967">Endosome</keyword>
<keyword id="KW-0272">Extracellular matrix</keyword>
<keyword id="KW-0345">HDL</keyword>
<keyword id="KW-0358">Heparin-binding</keyword>
<keyword id="KW-0445">Lipid transport</keyword>
<keyword id="KW-0446">Lipid-binding</keyword>
<keyword id="KW-0558">Oxidation</keyword>
<keyword id="KW-0597">Phosphoprotein</keyword>
<keyword id="KW-1185">Reference proteome</keyword>
<keyword id="KW-0677">Repeat</keyword>
<keyword id="KW-0964">Secreted</keyword>
<keyword id="KW-0732">Signal</keyword>
<keyword id="KW-0813">Transport</keyword>
<keyword id="KW-0850">VLDL</keyword>
<sequence>MKVLWAALLIALLAGCQGKMEQVVEPELEPEPELHQQADWQSGQPWELALGRFWDYLRWVQTLSEQVQEELLSSQVTQELTALMDETMKELKAYKSELEEQLSPVAEETRARLSKELQAAQARLGADMEDVRSRLAQYRSEVQAMLGQSTDELRARLTSHLRKLRTVSYTHLDVYKRQSLASQPLQERAQAWGERLRTRMEEVGSRTRDRLDEVKEQVEEVRAKLEEQAQQMRLQAEAFQARLKSWFEPLVEDMQRQWAGLVEKVQAAVGASAAPVPSDNH</sequence>
<gene>
    <name type="primary">APOE</name>
</gene>
<proteinExistence type="inferred from homology"/>
<accession>P0DKW5</accession>
<accession>A0A2K5DKL6</accession>
<name>APOE_AOTNA</name>
<protein>
    <recommendedName>
        <fullName>Apolipoprotein E</fullName>
        <shortName>Apo-E</shortName>
    </recommendedName>
</protein>
<organism>
    <name type="scientific">Aotus nancymaae</name>
    <name type="common">Ma's night monkey</name>
    <dbReference type="NCBI Taxonomy" id="37293"/>
    <lineage>
        <taxon>Eukaryota</taxon>
        <taxon>Metazoa</taxon>
        <taxon>Chordata</taxon>
        <taxon>Craniata</taxon>
        <taxon>Vertebrata</taxon>
        <taxon>Euteleostomi</taxon>
        <taxon>Mammalia</taxon>
        <taxon>Eutheria</taxon>
        <taxon>Euarchontoglires</taxon>
        <taxon>Primates</taxon>
        <taxon>Haplorrhini</taxon>
        <taxon>Platyrrhini</taxon>
        <taxon>Aotidae</taxon>
        <taxon>Aotus</taxon>
    </lineage>
</organism>